<evidence type="ECO:0000255" key="1">
    <source>
        <dbReference type="HAMAP-Rule" id="MF_01017"/>
    </source>
</evidence>
<dbReference type="EC" id="1.6.5.2" evidence="1"/>
<dbReference type="EMBL" id="AE017180">
    <property type="protein sequence ID" value="AAR34134.1"/>
    <property type="molecule type" value="Genomic_DNA"/>
</dbReference>
<dbReference type="RefSeq" id="NP_951861.1">
    <property type="nucleotide sequence ID" value="NC_002939.5"/>
</dbReference>
<dbReference type="SMR" id="Q74F05"/>
<dbReference type="FunCoup" id="Q74F05">
    <property type="interactions" value="328"/>
</dbReference>
<dbReference type="STRING" id="243231.GSU0804"/>
<dbReference type="EnsemblBacteria" id="AAR34134">
    <property type="protein sequence ID" value="AAR34134"/>
    <property type="gene ID" value="GSU0804"/>
</dbReference>
<dbReference type="KEGG" id="gsu:GSU0804"/>
<dbReference type="PATRIC" id="fig|243231.5.peg.801"/>
<dbReference type="eggNOG" id="COG0655">
    <property type="taxonomic scope" value="Bacteria"/>
</dbReference>
<dbReference type="HOGENOM" id="CLU_051402_0_2_7"/>
<dbReference type="InParanoid" id="Q74F05"/>
<dbReference type="OrthoDB" id="9801479at2"/>
<dbReference type="Proteomes" id="UP000000577">
    <property type="component" value="Chromosome"/>
</dbReference>
<dbReference type="GO" id="GO:0016020">
    <property type="term" value="C:membrane"/>
    <property type="evidence" value="ECO:0000318"/>
    <property type="project" value="GO_Central"/>
</dbReference>
<dbReference type="GO" id="GO:0050660">
    <property type="term" value="F:flavin adenine dinucleotide binding"/>
    <property type="evidence" value="ECO:0007669"/>
    <property type="project" value="UniProtKB-UniRule"/>
</dbReference>
<dbReference type="GO" id="GO:0010181">
    <property type="term" value="F:FMN binding"/>
    <property type="evidence" value="ECO:0007669"/>
    <property type="project" value="InterPro"/>
</dbReference>
<dbReference type="GO" id="GO:0051287">
    <property type="term" value="F:NAD binding"/>
    <property type="evidence" value="ECO:0007669"/>
    <property type="project" value="UniProtKB-UniRule"/>
</dbReference>
<dbReference type="GO" id="GO:0003955">
    <property type="term" value="F:NAD(P)H dehydrogenase (quinone) activity"/>
    <property type="evidence" value="ECO:0000318"/>
    <property type="project" value="GO_Central"/>
</dbReference>
<dbReference type="GO" id="GO:0050136">
    <property type="term" value="F:NADH:ubiquinone reductase (non-electrogenic) activity"/>
    <property type="evidence" value="ECO:0007669"/>
    <property type="project" value="RHEA"/>
</dbReference>
<dbReference type="GO" id="GO:0050661">
    <property type="term" value="F:NADP binding"/>
    <property type="evidence" value="ECO:0007669"/>
    <property type="project" value="UniProtKB-UniRule"/>
</dbReference>
<dbReference type="GO" id="GO:0008753">
    <property type="term" value="F:NADPH dehydrogenase (quinone) activity"/>
    <property type="evidence" value="ECO:0007669"/>
    <property type="project" value="RHEA"/>
</dbReference>
<dbReference type="FunFam" id="3.40.50.360:FF:000001">
    <property type="entry name" value="NAD(P)H dehydrogenase (Quinone) FQR1-like"/>
    <property type="match status" value="1"/>
</dbReference>
<dbReference type="Gene3D" id="3.40.50.360">
    <property type="match status" value="1"/>
</dbReference>
<dbReference type="HAMAP" id="MF_01017">
    <property type="entry name" value="NQOR"/>
    <property type="match status" value="1"/>
</dbReference>
<dbReference type="InterPro" id="IPR008254">
    <property type="entry name" value="Flavodoxin/NO_synth"/>
</dbReference>
<dbReference type="InterPro" id="IPR029039">
    <property type="entry name" value="Flavoprotein-like_sf"/>
</dbReference>
<dbReference type="InterPro" id="IPR010089">
    <property type="entry name" value="Flavoprotein_WrbA-like"/>
</dbReference>
<dbReference type="InterPro" id="IPR005025">
    <property type="entry name" value="FMN_Rdtase-like_dom"/>
</dbReference>
<dbReference type="InterPro" id="IPR037513">
    <property type="entry name" value="NQO"/>
</dbReference>
<dbReference type="NCBIfam" id="TIGR01755">
    <property type="entry name" value="flav_wrbA"/>
    <property type="match status" value="1"/>
</dbReference>
<dbReference type="NCBIfam" id="NF002999">
    <property type="entry name" value="PRK03767.1"/>
    <property type="match status" value="1"/>
</dbReference>
<dbReference type="PANTHER" id="PTHR30546">
    <property type="entry name" value="FLAVODOXIN-RELATED PROTEIN WRBA-RELATED"/>
    <property type="match status" value="1"/>
</dbReference>
<dbReference type="PANTHER" id="PTHR30546:SF23">
    <property type="entry name" value="FLAVOPROTEIN-LIKE PROTEIN YCP4-RELATED"/>
    <property type="match status" value="1"/>
</dbReference>
<dbReference type="Pfam" id="PF03358">
    <property type="entry name" value="FMN_red"/>
    <property type="match status" value="1"/>
</dbReference>
<dbReference type="SUPFAM" id="SSF52218">
    <property type="entry name" value="Flavoproteins"/>
    <property type="match status" value="1"/>
</dbReference>
<dbReference type="PROSITE" id="PS50902">
    <property type="entry name" value="FLAVODOXIN_LIKE"/>
    <property type="match status" value="1"/>
</dbReference>
<sequence length="203" mass="21480">MNVLIVYYSMYGHIHRMAEAVAEGVREVPGAEAVLRRVPETLSPDVLEKMGAVEPQKAFAHIPVATVDELASADAIIFGTPTRFGNMCGQMRQFLDATGGLWVKGSLVGKAAGVFTSSATQHGGQESTILTFHTFLLHQGMVIVGLPYAFAGQTRIDEITGGSPYGASTIAGGQGERLPSENDLAGARFQGRYVAQIAAKLNG</sequence>
<proteinExistence type="inferred from homology"/>
<organism>
    <name type="scientific">Geobacter sulfurreducens (strain ATCC 51573 / DSM 12127 / PCA)</name>
    <dbReference type="NCBI Taxonomy" id="243231"/>
    <lineage>
        <taxon>Bacteria</taxon>
        <taxon>Pseudomonadati</taxon>
        <taxon>Thermodesulfobacteriota</taxon>
        <taxon>Desulfuromonadia</taxon>
        <taxon>Geobacterales</taxon>
        <taxon>Geobacteraceae</taxon>
        <taxon>Geobacter</taxon>
    </lineage>
</organism>
<accession>Q74F05</accession>
<reference key="1">
    <citation type="journal article" date="2003" name="Science">
        <title>Genome of Geobacter sulfurreducens: metal reduction in subsurface environments.</title>
        <authorList>
            <person name="Methe B.A."/>
            <person name="Nelson K.E."/>
            <person name="Eisen J.A."/>
            <person name="Paulsen I.T."/>
            <person name="Nelson W.C."/>
            <person name="Heidelberg J.F."/>
            <person name="Wu D."/>
            <person name="Wu M."/>
            <person name="Ward N.L."/>
            <person name="Beanan M.J."/>
            <person name="Dodson R.J."/>
            <person name="Madupu R."/>
            <person name="Brinkac L.M."/>
            <person name="Daugherty S.C."/>
            <person name="DeBoy R.T."/>
            <person name="Durkin A.S."/>
            <person name="Gwinn M.L."/>
            <person name="Kolonay J.F."/>
            <person name="Sullivan S.A."/>
            <person name="Haft D.H."/>
            <person name="Selengut J."/>
            <person name="Davidsen T.M."/>
            <person name="Zafar N."/>
            <person name="White O."/>
            <person name="Tran B."/>
            <person name="Romero C."/>
            <person name="Forberger H.A."/>
            <person name="Weidman J.F."/>
            <person name="Khouri H.M."/>
            <person name="Feldblyum T.V."/>
            <person name="Utterback T.R."/>
            <person name="Van Aken S.E."/>
            <person name="Lovley D.R."/>
            <person name="Fraser C.M."/>
        </authorList>
    </citation>
    <scope>NUCLEOTIDE SEQUENCE [LARGE SCALE GENOMIC DNA]</scope>
    <source>
        <strain>ATCC 51573 / DSM 12127 / PCA</strain>
    </source>
</reference>
<protein>
    <recommendedName>
        <fullName evidence="1">NAD(P)H dehydrogenase (quinone)</fullName>
        <ecNumber evidence="1">1.6.5.2</ecNumber>
    </recommendedName>
    <alternativeName>
        <fullName>Flavoprotein WrbA</fullName>
    </alternativeName>
    <alternativeName>
        <fullName evidence="1">NAD(P)H:quinone oxidoreductase</fullName>
        <shortName evidence="1">NQO</shortName>
    </alternativeName>
</protein>
<feature type="chain" id="PRO_0000200749" description="NAD(P)H dehydrogenase (quinone)">
    <location>
        <begin position="1"/>
        <end position="203"/>
    </location>
</feature>
<feature type="domain" description="Flavodoxin-like" evidence="1">
    <location>
        <begin position="3"/>
        <end position="194"/>
    </location>
</feature>
<feature type="binding site" evidence="1">
    <location>
        <begin position="9"/>
        <end position="14"/>
    </location>
    <ligand>
        <name>FMN</name>
        <dbReference type="ChEBI" id="CHEBI:58210"/>
    </ligand>
</feature>
<feature type="binding site" evidence="1">
    <location>
        <position position="11"/>
    </location>
    <ligand>
        <name>NAD(+)</name>
        <dbReference type="ChEBI" id="CHEBI:57540"/>
    </ligand>
</feature>
<feature type="binding site" evidence="1">
    <location>
        <begin position="82"/>
        <end position="84"/>
    </location>
    <ligand>
        <name>FMN</name>
        <dbReference type="ChEBI" id="CHEBI:58210"/>
    </ligand>
</feature>
<feature type="binding site" evidence="1">
    <location>
        <position position="102"/>
    </location>
    <ligand>
        <name>substrate</name>
    </ligand>
</feature>
<feature type="binding site" evidence="1">
    <location>
        <begin position="117"/>
        <end position="123"/>
    </location>
    <ligand>
        <name>FMN</name>
        <dbReference type="ChEBI" id="CHEBI:58210"/>
    </ligand>
</feature>
<feature type="binding site" evidence="1">
    <location>
        <position position="138"/>
    </location>
    <ligand>
        <name>FMN</name>
        <dbReference type="ChEBI" id="CHEBI:58210"/>
    </ligand>
</feature>
<name>NQOR_GEOSL</name>
<keyword id="KW-0285">Flavoprotein</keyword>
<keyword id="KW-0288">FMN</keyword>
<keyword id="KW-0520">NAD</keyword>
<keyword id="KW-0521">NADP</keyword>
<keyword id="KW-0547">Nucleotide-binding</keyword>
<keyword id="KW-0560">Oxidoreductase</keyword>
<keyword id="KW-1185">Reference proteome</keyword>
<comment type="catalytic activity">
    <reaction evidence="1">
        <text>a quinone + NADH + H(+) = a quinol + NAD(+)</text>
        <dbReference type="Rhea" id="RHEA:46160"/>
        <dbReference type="ChEBI" id="CHEBI:15378"/>
        <dbReference type="ChEBI" id="CHEBI:24646"/>
        <dbReference type="ChEBI" id="CHEBI:57540"/>
        <dbReference type="ChEBI" id="CHEBI:57945"/>
        <dbReference type="ChEBI" id="CHEBI:132124"/>
        <dbReference type="EC" id="1.6.5.2"/>
    </reaction>
</comment>
<comment type="catalytic activity">
    <reaction evidence="1">
        <text>a quinone + NADPH + H(+) = a quinol + NADP(+)</text>
        <dbReference type="Rhea" id="RHEA:46164"/>
        <dbReference type="ChEBI" id="CHEBI:15378"/>
        <dbReference type="ChEBI" id="CHEBI:24646"/>
        <dbReference type="ChEBI" id="CHEBI:57783"/>
        <dbReference type="ChEBI" id="CHEBI:58349"/>
        <dbReference type="ChEBI" id="CHEBI:132124"/>
        <dbReference type="EC" id="1.6.5.2"/>
    </reaction>
</comment>
<comment type="cofactor">
    <cofactor evidence="1">
        <name>FMN</name>
        <dbReference type="ChEBI" id="CHEBI:58210"/>
    </cofactor>
    <text evidence="1">Binds 1 FMN per monomer.</text>
</comment>
<comment type="similarity">
    <text evidence="1">Belongs to the WrbA family.</text>
</comment>
<gene>
    <name type="ordered locus">GSU0804</name>
</gene>